<protein>
    <recommendedName>
        <fullName evidence="1">DNA-directed RNA polymerase subunit omega</fullName>
        <shortName evidence="1">RNAP omega subunit</shortName>
        <ecNumber evidence="1">2.7.7.6</ecNumber>
    </recommendedName>
    <alternativeName>
        <fullName evidence="1">RNA polymerase omega subunit</fullName>
    </alternativeName>
    <alternativeName>
        <fullName evidence="1">Transcriptase subunit omega</fullName>
    </alternativeName>
</protein>
<organism>
    <name type="scientific">Francisella philomiragia subsp. philomiragia (strain ATCC 25017 / CCUG 19701 / FSC 153 / O#319-036)</name>
    <dbReference type="NCBI Taxonomy" id="484022"/>
    <lineage>
        <taxon>Bacteria</taxon>
        <taxon>Pseudomonadati</taxon>
        <taxon>Pseudomonadota</taxon>
        <taxon>Gammaproteobacteria</taxon>
        <taxon>Thiotrichales</taxon>
        <taxon>Francisellaceae</taxon>
        <taxon>Francisella</taxon>
    </lineage>
</organism>
<dbReference type="EC" id="2.7.7.6" evidence="1"/>
<dbReference type="EMBL" id="CP000937">
    <property type="protein sequence ID" value="ABZ86444.1"/>
    <property type="molecule type" value="Genomic_DNA"/>
</dbReference>
<dbReference type="SMR" id="B0TZ05"/>
<dbReference type="KEGG" id="fph:Fphi_0228"/>
<dbReference type="eggNOG" id="COG1758">
    <property type="taxonomic scope" value="Bacteria"/>
</dbReference>
<dbReference type="HOGENOM" id="CLU_125406_5_1_6"/>
<dbReference type="GO" id="GO:0000428">
    <property type="term" value="C:DNA-directed RNA polymerase complex"/>
    <property type="evidence" value="ECO:0007669"/>
    <property type="project" value="UniProtKB-KW"/>
</dbReference>
<dbReference type="GO" id="GO:0003677">
    <property type="term" value="F:DNA binding"/>
    <property type="evidence" value="ECO:0007669"/>
    <property type="project" value="UniProtKB-UniRule"/>
</dbReference>
<dbReference type="GO" id="GO:0003899">
    <property type="term" value="F:DNA-directed RNA polymerase activity"/>
    <property type="evidence" value="ECO:0007669"/>
    <property type="project" value="UniProtKB-UniRule"/>
</dbReference>
<dbReference type="GO" id="GO:0006351">
    <property type="term" value="P:DNA-templated transcription"/>
    <property type="evidence" value="ECO:0007669"/>
    <property type="project" value="UniProtKB-UniRule"/>
</dbReference>
<dbReference type="Gene3D" id="3.90.940.10">
    <property type="match status" value="1"/>
</dbReference>
<dbReference type="HAMAP" id="MF_00366">
    <property type="entry name" value="RNApol_bact_RpoZ"/>
    <property type="match status" value="1"/>
</dbReference>
<dbReference type="InterPro" id="IPR003716">
    <property type="entry name" value="DNA-dir_RNA_pol_omega"/>
</dbReference>
<dbReference type="InterPro" id="IPR006110">
    <property type="entry name" value="Pol_omega/Rpo6/RPB6"/>
</dbReference>
<dbReference type="InterPro" id="IPR036161">
    <property type="entry name" value="RPB6/omega-like_sf"/>
</dbReference>
<dbReference type="NCBIfam" id="TIGR00690">
    <property type="entry name" value="rpoZ"/>
    <property type="match status" value="1"/>
</dbReference>
<dbReference type="PANTHER" id="PTHR34476">
    <property type="entry name" value="DNA-DIRECTED RNA POLYMERASE SUBUNIT OMEGA"/>
    <property type="match status" value="1"/>
</dbReference>
<dbReference type="PANTHER" id="PTHR34476:SF1">
    <property type="entry name" value="DNA-DIRECTED RNA POLYMERASE SUBUNIT OMEGA"/>
    <property type="match status" value="1"/>
</dbReference>
<dbReference type="Pfam" id="PF01192">
    <property type="entry name" value="RNA_pol_Rpb6"/>
    <property type="match status" value="1"/>
</dbReference>
<dbReference type="SMART" id="SM01409">
    <property type="entry name" value="RNA_pol_Rpb6"/>
    <property type="match status" value="1"/>
</dbReference>
<dbReference type="SUPFAM" id="SSF63562">
    <property type="entry name" value="RPB6/omega subunit-like"/>
    <property type="match status" value="1"/>
</dbReference>
<accession>B0TZ05</accession>
<proteinExistence type="inferred from homology"/>
<feature type="chain" id="PRO_1000079629" description="DNA-directed RNA polymerase subunit omega">
    <location>
        <begin position="1"/>
        <end position="72"/>
    </location>
</feature>
<keyword id="KW-0240">DNA-directed RNA polymerase</keyword>
<keyword id="KW-0548">Nucleotidyltransferase</keyword>
<keyword id="KW-0804">Transcription</keyword>
<keyword id="KW-0808">Transferase</keyword>
<name>RPOZ_FRAP2</name>
<comment type="function">
    <text evidence="1">Promotes RNA polymerase assembly. Latches the N- and C-terminal regions of the beta' subunit thereby facilitating its interaction with the beta and alpha subunits.</text>
</comment>
<comment type="catalytic activity">
    <reaction evidence="1">
        <text>RNA(n) + a ribonucleoside 5'-triphosphate = RNA(n+1) + diphosphate</text>
        <dbReference type="Rhea" id="RHEA:21248"/>
        <dbReference type="Rhea" id="RHEA-COMP:14527"/>
        <dbReference type="Rhea" id="RHEA-COMP:17342"/>
        <dbReference type="ChEBI" id="CHEBI:33019"/>
        <dbReference type="ChEBI" id="CHEBI:61557"/>
        <dbReference type="ChEBI" id="CHEBI:140395"/>
        <dbReference type="EC" id="2.7.7.6"/>
    </reaction>
</comment>
<comment type="subunit">
    <text evidence="1">The RNAP catalytic core consists of 2 alpha, 1 beta, 1 beta' and 1 omega subunit. When a sigma factor is associated with the core the holoenzyme is formed, which can initiate transcription.</text>
</comment>
<comment type="similarity">
    <text evidence="1">Belongs to the RNA polymerase subunit omega family.</text>
</comment>
<reference key="1">
    <citation type="submission" date="2007-12" db="EMBL/GenBank/DDBJ databases">
        <title>Complete sequence of chromosome of Francisella philomiragia subsp. philomiragia ATCC 25017.</title>
        <authorList>
            <consortium name="US DOE Joint Genome Institute"/>
            <person name="Copeland A."/>
            <person name="Lucas S."/>
            <person name="Lapidus A."/>
            <person name="Barry K."/>
            <person name="Detter J.C."/>
            <person name="Glavina del Rio T."/>
            <person name="Hammon N."/>
            <person name="Israni S."/>
            <person name="Dalin E."/>
            <person name="Tice H."/>
            <person name="Pitluck S."/>
            <person name="Chain P."/>
            <person name="Malfatti S."/>
            <person name="Shin M."/>
            <person name="Vergez L."/>
            <person name="Schmutz J."/>
            <person name="Larimer F."/>
            <person name="Land M."/>
            <person name="Hauser L."/>
            <person name="Richardson P."/>
        </authorList>
    </citation>
    <scope>NUCLEOTIDE SEQUENCE [LARGE SCALE GENOMIC DNA]</scope>
    <source>
        <strain>ATCC 25017 / CCUG 19701 / FSC 153 / O#319-036</strain>
    </source>
</reference>
<sequence>MARVTVEDCLDKVETRFDLVVLASMRANNILKKGYSESADNEKKEKATVVALREIAESEITPDQILRNEIEG</sequence>
<evidence type="ECO:0000255" key="1">
    <source>
        <dbReference type="HAMAP-Rule" id="MF_00366"/>
    </source>
</evidence>
<gene>
    <name evidence="1" type="primary">rpoZ</name>
    <name type="ordered locus">Fphi_0228</name>
</gene>